<organism>
    <name type="scientific">Saccharomyces cerevisiae (strain ATCC 204508 / S288c)</name>
    <name type="common">Baker's yeast</name>
    <dbReference type="NCBI Taxonomy" id="559292"/>
    <lineage>
        <taxon>Eukaryota</taxon>
        <taxon>Fungi</taxon>
        <taxon>Dikarya</taxon>
        <taxon>Ascomycota</taxon>
        <taxon>Saccharomycotina</taxon>
        <taxon>Saccharomycetes</taxon>
        <taxon>Saccharomycetales</taxon>
        <taxon>Saccharomycetaceae</taxon>
        <taxon>Saccharomyces</taxon>
    </lineage>
</organism>
<keyword id="KW-0963">Cytoplasm</keyword>
<keyword id="KW-0378">Hydrolase</keyword>
<keyword id="KW-0576">Peroxisome</keyword>
<keyword id="KW-0645">Protease</keyword>
<keyword id="KW-1185">Reference proteome</keyword>
<keyword id="KW-0788">Thiol protease</keyword>
<keyword id="KW-0833">Ubl conjugation pathway</keyword>
<dbReference type="EC" id="3.4.19.12" evidence="5"/>
<dbReference type="EMBL" id="Z49212">
    <property type="protein sequence ID" value="CAA89137.1"/>
    <property type="molecule type" value="Genomic_DNA"/>
</dbReference>
<dbReference type="EMBL" id="BK006946">
    <property type="protein sequence ID" value="DAA10205.1"/>
    <property type="molecule type" value="Genomic_DNA"/>
</dbReference>
<dbReference type="PIR" id="S53974">
    <property type="entry name" value="S53974"/>
</dbReference>
<dbReference type="RefSeq" id="NP_014033.1">
    <property type="nucleotide sequence ID" value="NM_001182814.1"/>
</dbReference>
<dbReference type="SMR" id="P50101"/>
<dbReference type="BioGRID" id="35484">
    <property type="interactions" value="261"/>
</dbReference>
<dbReference type="DIP" id="DIP-6313N"/>
<dbReference type="FunCoup" id="P50101">
    <property type="interactions" value="1708"/>
</dbReference>
<dbReference type="IntAct" id="P50101">
    <property type="interactions" value="29"/>
</dbReference>
<dbReference type="MINT" id="P50101"/>
<dbReference type="STRING" id="4932.YMR304W"/>
<dbReference type="MEROPS" id="C19.099"/>
<dbReference type="iPTMnet" id="P50101"/>
<dbReference type="PaxDb" id="4932-YMR304W"/>
<dbReference type="PeptideAtlas" id="P50101"/>
<dbReference type="EnsemblFungi" id="YMR304W_mRNA">
    <property type="protein sequence ID" value="YMR304W"/>
    <property type="gene ID" value="YMR304W"/>
</dbReference>
<dbReference type="GeneID" id="855350"/>
<dbReference type="KEGG" id="sce:YMR304W"/>
<dbReference type="AGR" id="SGD:S000004920"/>
<dbReference type="SGD" id="S000004920">
    <property type="gene designation" value="UBP15"/>
</dbReference>
<dbReference type="VEuPathDB" id="FungiDB:YMR304W"/>
<dbReference type="eggNOG" id="KOG1863">
    <property type="taxonomic scope" value="Eukaryota"/>
</dbReference>
<dbReference type="HOGENOM" id="CLU_003532_2_1_1"/>
<dbReference type="InParanoid" id="P50101"/>
<dbReference type="OMA" id="HTAHHRF"/>
<dbReference type="OrthoDB" id="289038at2759"/>
<dbReference type="BioCyc" id="YEAST:G3O-32969-MONOMER"/>
<dbReference type="Reactome" id="R-SCE-5689880">
    <property type="pathway name" value="Ub-specific processing proteases"/>
</dbReference>
<dbReference type="Reactome" id="R-SCE-6781823">
    <property type="pathway name" value="Formation of TC-NER Pre-Incision Complex"/>
</dbReference>
<dbReference type="Reactome" id="R-SCE-6782135">
    <property type="pathway name" value="Dual incision in TC-NER"/>
</dbReference>
<dbReference type="Reactome" id="R-SCE-6782210">
    <property type="pathway name" value="Gap-filling DNA repair synthesis and ligation in TC-NER"/>
</dbReference>
<dbReference type="Reactome" id="R-SCE-8866652">
    <property type="pathway name" value="Synthesis of active ubiquitin: roles of E1 and E2 enzymes"/>
</dbReference>
<dbReference type="Reactome" id="R-SCE-8948747">
    <property type="pathway name" value="Regulation of PTEN localization"/>
</dbReference>
<dbReference type="BioGRID-ORCS" id="855350">
    <property type="hits" value="0 hits in 10 CRISPR screens"/>
</dbReference>
<dbReference type="CD-CODE" id="E03F929F">
    <property type="entry name" value="Stress granule"/>
</dbReference>
<dbReference type="PRO" id="PR:P50101"/>
<dbReference type="Proteomes" id="UP000002311">
    <property type="component" value="Chromosome XIII"/>
</dbReference>
<dbReference type="RNAct" id="P50101">
    <property type="molecule type" value="protein"/>
</dbReference>
<dbReference type="GO" id="GO:0005737">
    <property type="term" value="C:cytoplasm"/>
    <property type="evidence" value="ECO:0007005"/>
    <property type="project" value="SGD"/>
</dbReference>
<dbReference type="GO" id="GO:0005829">
    <property type="term" value="C:cytosol"/>
    <property type="evidence" value="ECO:0000314"/>
    <property type="project" value="SGD"/>
</dbReference>
<dbReference type="GO" id="GO:0005783">
    <property type="term" value="C:endoplasmic reticulum"/>
    <property type="evidence" value="ECO:0007005"/>
    <property type="project" value="SGD"/>
</dbReference>
<dbReference type="GO" id="GO:0005634">
    <property type="term" value="C:nucleus"/>
    <property type="evidence" value="ECO:0000318"/>
    <property type="project" value="GO_Central"/>
</dbReference>
<dbReference type="GO" id="GO:0005777">
    <property type="term" value="C:peroxisome"/>
    <property type="evidence" value="ECO:0000314"/>
    <property type="project" value="SGD"/>
</dbReference>
<dbReference type="GO" id="GO:0004843">
    <property type="term" value="F:cysteine-type deubiquitinase activity"/>
    <property type="evidence" value="ECO:0000314"/>
    <property type="project" value="SGD"/>
</dbReference>
<dbReference type="GO" id="GO:0010995">
    <property type="term" value="P:free ubiquitin chain depolymerization"/>
    <property type="evidence" value="ECO:0000314"/>
    <property type="project" value="SGD"/>
</dbReference>
<dbReference type="GO" id="GO:0016973">
    <property type="term" value="P:poly(A)+ mRNA export from nucleus"/>
    <property type="evidence" value="ECO:0000316"/>
    <property type="project" value="SGD"/>
</dbReference>
<dbReference type="GO" id="GO:0016579">
    <property type="term" value="P:protein deubiquitination"/>
    <property type="evidence" value="ECO:0000314"/>
    <property type="project" value="SGD"/>
</dbReference>
<dbReference type="GO" id="GO:0006508">
    <property type="term" value="P:proteolysis"/>
    <property type="evidence" value="ECO:0007669"/>
    <property type="project" value="UniProtKB-KW"/>
</dbReference>
<dbReference type="GO" id="GO:0031647">
    <property type="term" value="P:regulation of protein stability"/>
    <property type="evidence" value="ECO:0000318"/>
    <property type="project" value="GO_Central"/>
</dbReference>
<dbReference type="CDD" id="cd03775">
    <property type="entry name" value="MATH_Ubp21p"/>
    <property type="match status" value="1"/>
</dbReference>
<dbReference type="CDD" id="cd02659">
    <property type="entry name" value="peptidase_C19C"/>
    <property type="match status" value="1"/>
</dbReference>
<dbReference type="FunFam" id="3.90.70.10:FF:000044">
    <property type="entry name" value="Ubiquitin carboxyl-terminal hydrolase 13"/>
    <property type="match status" value="1"/>
</dbReference>
<dbReference type="FunFam" id="2.60.210.10:FF:000016">
    <property type="entry name" value="Ubiquitin-specific protease"/>
    <property type="match status" value="1"/>
</dbReference>
<dbReference type="Gene3D" id="2.60.210.10">
    <property type="entry name" value="Apoptosis, Tumor Necrosis Factor Receptor Associated Protein 2, Chain A"/>
    <property type="match status" value="1"/>
</dbReference>
<dbReference type="Gene3D" id="3.90.70.10">
    <property type="entry name" value="Cysteine proteinases"/>
    <property type="match status" value="1"/>
</dbReference>
<dbReference type="Gene3D" id="3.10.20.90">
    <property type="entry name" value="Phosphatidylinositol 3-kinase Catalytic Subunit, Chain A, domain 1"/>
    <property type="match status" value="1"/>
</dbReference>
<dbReference type="InterPro" id="IPR002083">
    <property type="entry name" value="MATH/TRAF_dom"/>
</dbReference>
<dbReference type="InterPro" id="IPR038765">
    <property type="entry name" value="Papain-like_cys_pep_sf"/>
</dbReference>
<dbReference type="InterPro" id="IPR050164">
    <property type="entry name" value="Peptidase_C19"/>
</dbReference>
<dbReference type="InterPro" id="IPR001394">
    <property type="entry name" value="Peptidase_C19_UCH"/>
</dbReference>
<dbReference type="InterPro" id="IPR008974">
    <property type="entry name" value="TRAF-like"/>
</dbReference>
<dbReference type="InterPro" id="IPR024729">
    <property type="entry name" value="USP7_ICP0-binding_dom"/>
</dbReference>
<dbReference type="InterPro" id="IPR029346">
    <property type="entry name" value="USP_C"/>
</dbReference>
<dbReference type="InterPro" id="IPR018200">
    <property type="entry name" value="USP_CS"/>
</dbReference>
<dbReference type="InterPro" id="IPR028889">
    <property type="entry name" value="USP_dom"/>
</dbReference>
<dbReference type="PANTHER" id="PTHR24006">
    <property type="entry name" value="UBIQUITIN CARBOXYL-TERMINAL HYDROLASE"/>
    <property type="match status" value="1"/>
</dbReference>
<dbReference type="PANTHER" id="PTHR24006:SF644">
    <property type="entry name" value="UBIQUITIN CARBOXYL-TERMINAL HYDROLASE 7"/>
    <property type="match status" value="1"/>
</dbReference>
<dbReference type="Pfam" id="PF22486">
    <property type="entry name" value="MATH_2"/>
    <property type="match status" value="1"/>
</dbReference>
<dbReference type="Pfam" id="PF00443">
    <property type="entry name" value="UCH"/>
    <property type="match status" value="1"/>
</dbReference>
<dbReference type="Pfam" id="PF14533">
    <property type="entry name" value="USP7_C2"/>
    <property type="match status" value="1"/>
</dbReference>
<dbReference type="Pfam" id="PF12436">
    <property type="entry name" value="USP7_ICP0_bdg"/>
    <property type="match status" value="1"/>
</dbReference>
<dbReference type="SMART" id="SM00061">
    <property type="entry name" value="MATH"/>
    <property type="match status" value="1"/>
</dbReference>
<dbReference type="SUPFAM" id="SSF54001">
    <property type="entry name" value="Cysteine proteinases"/>
    <property type="match status" value="1"/>
</dbReference>
<dbReference type="SUPFAM" id="SSF49599">
    <property type="entry name" value="TRAF domain-like"/>
    <property type="match status" value="1"/>
</dbReference>
<dbReference type="PROSITE" id="PS50144">
    <property type="entry name" value="MATH"/>
    <property type="match status" value="1"/>
</dbReference>
<dbReference type="PROSITE" id="PS00972">
    <property type="entry name" value="USP_1"/>
    <property type="match status" value="1"/>
</dbReference>
<dbReference type="PROSITE" id="PS00973">
    <property type="entry name" value="USP_2"/>
    <property type="match status" value="1"/>
</dbReference>
<dbReference type="PROSITE" id="PS50235">
    <property type="entry name" value="USP_3"/>
    <property type="match status" value="1"/>
</dbReference>
<feature type="chain" id="PRO_0000080600" description="Ubiquitin carboxyl-terminal hydrolase 15">
    <location>
        <begin position="1"/>
        <end position="1230"/>
    </location>
</feature>
<feature type="domain" description="MATH" evidence="1">
    <location>
        <begin position="39"/>
        <end position="179"/>
    </location>
</feature>
<feature type="domain" description="USP">
    <location>
        <begin position="205"/>
        <end position="536"/>
    </location>
</feature>
<feature type="active site" description="Nucleophile" evidence="2 3 8">
    <location>
        <position position="214"/>
    </location>
</feature>
<feature type="active site" description="Proton acceptor" evidence="2 3">
    <location>
        <position position="465"/>
    </location>
</feature>
<feature type="mutagenesis site" description="Abolished deubiquitinase activity." evidence="5">
    <original>C</original>
    <variation>A</variation>
    <location>
        <position position="214"/>
    </location>
</feature>
<gene>
    <name evidence="6 9" type="primary">UBP15</name>
    <name type="ordered locus">YMR304W</name>
    <name type="ORF">YM9952.06</name>
</gene>
<reference key="1">
    <citation type="journal article" date="1997" name="Nature">
        <title>The nucleotide sequence of Saccharomyces cerevisiae chromosome XIII.</title>
        <authorList>
            <person name="Bowman S."/>
            <person name="Churcher C.M."/>
            <person name="Badcock K."/>
            <person name="Brown D."/>
            <person name="Chillingworth T."/>
            <person name="Connor R."/>
            <person name="Dedman K."/>
            <person name="Devlin K."/>
            <person name="Gentles S."/>
            <person name="Hamlin N."/>
            <person name="Hunt S."/>
            <person name="Jagels K."/>
            <person name="Lye G."/>
            <person name="Moule S."/>
            <person name="Odell C."/>
            <person name="Pearson D."/>
            <person name="Rajandream M.A."/>
            <person name="Rice P."/>
            <person name="Skelton J."/>
            <person name="Walsh S.V."/>
            <person name="Whitehead S."/>
            <person name="Barrell B.G."/>
        </authorList>
    </citation>
    <scope>NUCLEOTIDE SEQUENCE [LARGE SCALE GENOMIC DNA]</scope>
    <source>
        <strain>ATCC 204508 / S288c</strain>
    </source>
</reference>
<reference key="2">
    <citation type="journal article" date="2014" name="G3 (Bethesda)">
        <title>The reference genome sequence of Saccharomyces cerevisiae: Then and now.</title>
        <authorList>
            <person name="Engel S.R."/>
            <person name="Dietrich F.S."/>
            <person name="Fisk D.G."/>
            <person name="Binkley G."/>
            <person name="Balakrishnan R."/>
            <person name="Costanzo M.C."/>
            <person name="Dwight S.S."/>
            <person name="Hitz B.C."/>
            <person name="Karra K."/>
            <person name="Nash R.S."/>
            <person name="Weng S."/>
            <person name="Wong E.D."/>
            <person name="Lloyd P."/>
            <person name="Skrzypek M.S."/>
            <person name="Miyasato S.R."/>
            <person name="Simison M."/>
            <person name="Cherry J.M."/>
        </authorList>
    </citation>
    <scope>GENOME REANNOTATION</scope>
    <source>
        <strain>ATCC 204508 / S288c</strain>
    </source>
</reference>
<reference key="3">
    <citation type="journal article" date="2003" name="Nature">
        <title>Global analysis of protein expression in yeast.</title>
        <authorList>
            <person name="Ghaemmaghami S."/>
            <person name="Huh W.-K."/>
            <person name="Bower K."/>
            <person name="Howson R.W."/>
            <person name="Belle A."/>
            <person name="Dephoure N."/>
            <person name="O'Shea E.K."/>
            <person name="Weissman J.S."/>
        </authorList>
    </citation>
    <scope>LEVEL OF PROTEIN EXPRESSION [LARGE SCALE ANALYSIS]</scope>
</reference>
<reference key="4">
    <citation type="journal article" date="2009" name="Science">
        <title>Global analysis of Cdk1 substrate phosphorylation sites provides insights into evolution.</title>
        <authorList>
            <person name="Holt L.J."/>
            <person name="Tuch B.B."/>
            <person name="Villen J."/>
            <person name="Johnson A.D."/>
            <person name="Gygi S.P."/>
            <person name="Morgan D.O."/>
        </authorList>
    </citation>
    <scope>IDENTIFICATION BY MASS SPECTROMETRY [LARGE SCALE ANALYSIS]</scope>
</reference>
<reference key="5">
    <citation type="journal article" date="2011" name="J. Biol. Chem.">
        <title>Ubp15p, a ubiquitin hydrolase associated with the peroxisomal export machinery.</title>
        <authorList>
            <person name="Debelyy M.O."/>
            <person name="Platta H.W."/>
            <person name="Saffian D."/>
            <person name="Hensel A."/>
            <person name="Thoms S."/>
            <person name="Meyer H.E."/>
            <person name="Warscheid B."/>
            <person name="Girzalsky W."/>
            <person name="Erdmann R."/>
        </authorList>
    </citation>
    <scope>FUNCTION</scope>
    <scope>CATALYTIC ACTIVITY</scope>
    <scope>SUBCELLULAR LOCATION</scope>
    <scope>INTERACTION WITH PEX6</scope>
    <scope>ACTIVE SITE</scope>
    <scope>DISRUPTION PHENOTYPE</scope>
    <scope>MUTAGENESIS OF CYS-214</scope>
</reference>
<evidence type="ECO:0000255" key="1">
    <source>
        <dbReference type="PROSITE-ProRule" id="PRU00129"/>
    </source>
</evidence>
<evidence type="ECO:0000255" key="2">
    <source>
        <dbReference type="PROSITE-ProRule" id="PRU10092"/>
    </source>
</evidence>
<evidence type="ECO:0000255" key="3">
    <source>
        <dbReference type="PROSITE-ProRule" id="PRU10093"/>
    </source>
</evidence>
<evidence type="ECO:0000269" key="4">
    <source>
    </source>
</evidence>
<evidence type="ECO:0000269" key="5">
    <source>
    </source>
</evidence>
<evidence type="ECO:0000303" key="6">
    <source>
    </source>
</evidence>
<evidence type="ECO:0000305" key="7"/>
<evidence type="ECO:0000305" key="8">
    <source>
    </source>
</evidence>
<evidence type="ECO:0000312" key="9">
    <source>
        <dbReference type="SGD" id="S000004920"/>
    </source>
</evidence>
<comment type="function">
    <text evidence="5">Deubiquitinase involved in peroxisome import by mediating deubiquitination of the peroxisomal import receptor PEX5 (PubMed:21665945). Catalyzes deubiquitination of both monoubiquitiated and polyubiquitinated forms of PEX5 following its retrotranslocation into the cytosol, resetting PEX5 for a subsequent import cycle (PubMed:21665945).</text>
</comment>
<comment type="catalytic activity">
    <reaction evidence="5">
        <text>Thiol-dependent hydrolysis of ester, thioester, amide, peptide and isopeptide bonds formed by the C-terminal Gly of ubiquitin (a 76-residue protein attached to proteins as an intracellular targeting signal).</text>
        <dbReference type="EC" id="3.4.19.12"/>
    </reaction>
</comment>
<comment type="subunit">
    <text evidence="5">Interacts with PEX6; promoting association with the PEX1-PEX6 ATPase complex.</text>
</comment>
<comment type="subcellular location">
    <subcellularLocation>
        <location evidence="5">Cytoplasm</location>
        <location evidence="5">Cytosol</location>
    </subcellularLocation>
    <subcellularLocation>
        <location evidence="5">Peroxisome</location>
    </subcellularLocation>
</comment>
<comment type="disruption phenotype">
    <text evidence="5">Cells show oxidative stress-related import deficiencies and growth defect on oleic acid (PubMed:21665945). Peroxisomes are clustered (PubMed:21665945). Cells display defects in peroxisomal import of proteins containing a C-terminal PTS1-type tripeptide peroxisomal targeting signal (SKL-type) (PubMed:21665945).</text>
</comment>
<comment type="miscellaneous">
    <text evidence="4">Present with 2810 molecules/cell in log phase SD medium.</text>
</comment>
<comment type="similarity">
    <text evidence="7">Belongs to the peptidase C19 family.</text>
</comment>
<proteinExistence type="evidence at protein level"/>
<name>UBP15_YEAST</name>
<accession>P50101</accession>
<accession>D6W0D1</accession>
<sequence>MSSEDELGSIGTVFPGSPIDKSIGSILPQFDEEVETLLEDSFTWNIPDWNELTNPKYNSPRFRIGDFEWDILLFPQGNHNKGVAVYLEPHPEEKLDETTGEMVPVDPDWYCCAQFAIGISRPGNGDTINLINKSHHRFNALDTDWGFANLIDLNNLKHPSKGRPLSFLNEGTLNITAYVRILKDPTGVLWHNFLNYDSKKVTGYVGFRNQGATCYLNSLLQSYFFTKYFRKLVYEIPTEHESPNNSVPLALQRAFYQLQVSDIPLDTLELTRSFGWDTAESFTQHDVQELNRILMDRLENNMKGTPVEGKLNEIFVGKMKSYIKCINVDYESARVEDFWDLQLNVKNFKNLQESFDNYIEMELMNGENQYAAQDYGLQDAQKGVIFESFPPVLHLQLKRFEYDFNYDQMVKVNDKYEFPETIDLSPFVDKDVLKKTLDSENKDKNPYVYNLHGVLVHSGDISTGHYYTLIKPGVEDQWYRFDDERVWRVTKKQVFQENFGCDRLPDEKVRTMTRGEYQNYIIQRHTSAYMLVYIRQEQEEDLLRPVLESDVPKHVITRVREEIKERETKEKEIREAHLYVTLRLHSIKEFIHYEGFDYFAHDGFRLFAEELNDSGLQQINLKVLRTTKLSDIFASIKETMNIPQERDVKYWKMDYRRNSTLRLTQPINFESVNITLQEALKKEKKRTMQTQYGEEGVASTEEDDKALLETVSFLDLFIEEPYLELQFLNKLKEASLISKAQLDDELISTIRTNLPELTKGGIEPVFATDNKSNLLFVKSYDPHTQKLLGFGHFAVNQLQQLSDISAIIEDSISSNEKLTFYEEVQPGTINEIYMKETIYDADIDTGDIVSFEVPGAVLPDTFPVYATIKDFYSYLRYRVKLKFSKFDGSSEEYGVSNEIPESFEFWISAYAPYDDLARMVSKYAHVKPEYLKIIALYSNGRFVLKSTSLLNDYLLKDFNCDQIPPFAFEVLSVPLKELERLRPIKLYWLKNSYIHYQCFEFEVANDYTESQFLEKVQHKIGFTDEEKENILLWTNTNFQFQGLLSDQNTFKDVSKHSLLFGRILPEESKLFKELNRLENVQTSSLEDFMDDENATDRPMDDEQDLGMAIEHSEDMKGRIVVVQQYFKDLENRHGISFLFNLIPDETFPKTKDRLHAKFGLGQKEFSKIKLSIGYSTEEGTVFRSLQGFSDEELDKVILYDIMSNLDYIYMDHPDRLRSHSSYDRPMIIKN</sequence>
<protein>
    <recommendedName>
        <fullName evidence="7">Ubiquitin carboxyl-terminal hydrolase 15</fullName>
        <ecNumber evidence="5">3.4.19.12</ecNumber>
    </recommendedName>
    <alternativeName>
        <fullName>Deubiquitinating enzyme 15</fullName>
    </alternativeName>
    <alternativeName>
        <fullName>Ubiquitin thioesterase 15</fullName>
    </alternativeName>
    <alternativeName>
        <fullName>Ubiquitin-specific-processing protease 15</fullName>
    </alternativeName>
</protein>